<proteinExistence type="inferred from homology"/>
<evidence type="ECO:0000250" key="1">
    <source>
        <dbReference type="UniProtKB" id="Q9X0Z6"/>
    </source>
</evidence>
<evidence type="ECO:0000255" key="2">
    <source>
        <dbReference type="PROSITE-ProRule" id="PRU01266"/>
    </source>
</evidence>
<evidence type="ECO:0000269" key="3">
    <source>
    </source>
</evidence>
<evidence type="ECO:0000305" key="4"/>
<keyword id="KW-0004">4Fe-4S</keyword>
<keyword id="KW-0408">Iron</keyword>
<keyword id="KW-0411">Iron-sulfur</keyword>
<keyword id="KW-0479">Metal-binding</keyword>
<keyword id="KW-1185">Reference proteome</keyword>
<keyword id="KW-0949">S-adenosyl-L-methionine</keyword>
<comment type="function">
    <text evidence="3">In vitro, can cleave S-adenosyl-L-methionine into methionine and 5'-deoxyadenosine (AdoH).</text>
</comment>
<comment type="cofactor">
    <cofactor evidence="3">
        <name>[4Fe-4S] cluster</name>
        <dbReference type="ChEBI" id="CHEBI:49883"/>
    </cofactor>
    <text evidence="3">Binds 1 [4Fe-4S] cluster. The cluster is coordinated with 3 cysteines and an exchangeable S-adenosyl-L-methionine.</text>
</comment>
<comment type="similarity">
    <text evidence="4">Belongs to the radical SAM superfamily.</text>
</comment>
<accession>P0ADW6</accession>
<accession>P45476</accession>
<accession>Q2M901</accession>
<dbReference type="EMBL" id="U18997">
    <property type="protein sequence ID" value="AAA58013.1"/>
    <property type="status" value="ALT_SEQ"/>
    <property type="molecule type" value="Genomic_DNA"/>
</dbReference>
<dbReference type="EMBL" id="U00096">
    <property type="protein sequence ID" value="AAC76243.1"/>
    <property type="molecule type" value="Genomic_DNA"/>
</dbReference>
<dbReference type="EMBL" id="AP009048">
    <property type="protein sequence ID" value="BAE77255.1"/>
    <property type="molecule type" value="Genomic_DNA"/>
</dbReference>
<dbReference type="EMBL" id="L20253">
    <property type="status" value="NOT_ANNOTATED_CDS"/>
    <property type="molecule type" value="Genomic_DNA"/>
</dbReference>
<dbReference type="PIR" id="E65112">
    <property type="entry name" value="E65112"/>
</dbReference>
<dbReference type="RefSeq" id="NP_417678.1">
    <property type="nucleotide sequence ID" value="NC_000913.3"/>
</dbReference>
<dbReference type="RefSeq" id="WP_001299745.1">
    <property type="nucleotide sequence ID" value="NZ_SSZK01000007.1"/>
</dbReference>
<dbReference type="SMR" id="P0ADW6"/>
<dbReference type="BioGRID" id="4262426">
    <property type="interactions" value="12"/>
</dbReference>
<dbReference type="BioGRID" id="852046">
    <property type="interactions" value="1"/>
</dbReference>
<dbReference type="DIP" id="DIP-48274N"/>
<dbReference type="FunCoup" id="P0ADW6">
    <property type="interactions" value="193"/>
</dbReference>
<dbReference type="IntAct" id="P0ADW6">
    <property type="interactions" value="10"/>
</dbReference>
<dbReference type="STRING" id="511145.b3211"/>
<dbReference type="PaxDb" id="511145-b3211"/>
<dbReference type="EnsemblBacteria" id="AAC76243">
    <property type="protein sequence ID" value="AAC76243"/>
    <property type="gene ID" value="b3211"/>
</dbReference>
<dbReference type="GeneID" id="947733"/>
<dbReference type="KEGG" id="ecj:JW3178"/>
<dbReference type="KEGG" id="eco:b3211"/>
<dbReference type="KEGG" id="ecoc:C3026_17470"/>
<dbReference type="PATRIC" id="fig|1411691.4.peg.3518"/>
<dbReference type="EchoBASE" id="EB2660"/>
<dbReference type="eggNOG" id="COG1242">
    <property type="taxonomic scope" value="Bacteria"/>
</dbReference>
<dbReference type="HOGENOM" id="CLU_060920_0_0_6"/>
<dbReference type="InParanoid" id="P0ADW6"/>
<dbReference type="OMA" id="NAGFTCP"/>
<dbReference type="OrthoDB" id="9801689at2"/>
<dbReference type="PhylomeDB" id="P0ADW6"/>
<dbReference type="BioCyc" id="EcoCyc:G7669-MONOMER"/>
<dbReference type="PRO" id="PR:P0ADW6"/>
<dbReference type="Proteomes" id="UP000000625">
    <property type="component" value="Chromosome"/>
</dbReference>
<dbReference type="GO" id="GO:0051539">
    <property type="term" value="F:4 iron, 4 sulfur cluster binding"/>
    <property type="evidence" value="ECO:0000314"/>
    <property type="project" value="EcoCyc"/>
</dbReference>
<dbReference type="GO" id="GO:0003824">
    <property type="term" value="F:catalytic activity"/>
    <property type="evidence" value="ECO:0007669"/>
    <property type="project" value="InterPro"/>
</dbReference>
<dbReference type="GO" id="GO:0046872">
    <property type="term" value="F:metal ion binding"/>
    <property type="evidence" value="ECO:0007669"/>
    <property type="project" value="UniProtKB-KW"/>
</dbReference>
<dbReference type="CDD" id="cd01335">
    <property type="entry name" value="Radical_SAM"/>
    <property type="match status" value="1"/>
</dbReference>
<dbReference type="FunFam" id="3.80.30.20:FF:000004">
    <property type="entry name" value="Radical SAM protein family"/>
    <property type="match status" value="1"/>
</dbReference>
<dbReference type="Gene3D" id="3.80.30.20">
    <property type="entry name" value="tm_1862 like domain"/>
    <property type="match status" value="1"/>
</dbReference>
<dbReference type="InterPro" id="IPR039661">
    <property type="entry name" value="ELP3"/>
</dbReference>
<dbReference type="InterPro" id="IPR006638">
    <property type="entry name" value="Elp3/MiaA/NifB-like_rSAM"/>
</dbReference>
<dbReference type="InterPro" id="IPR032432">
    <property type="entry name" value="Radical_SAM_C"/>
</dbReference>
<dbReference type="InterPro" id="IPR007197">
    <property type="entry name" value="rSAM"/>
</dbReference>
<dbReference type="InterPro" id="IPR023404">
    <property type="entry name" value="rSAM_horseshoe"/>
</dbReference>
<dbReference type="InterPro" id="IPR005911">
    <property type="entry name" value="YhcC-like"/>
</dbReference>
<dbReference type="NCBIfam" id="TIGR01212">
    <property type="entry name" value="TIGR01212 family radical SAM protein"/>
    <property type="match status" value="1"/>
</dbReference>
<dbReference type="PANTHER" id="PTHR11135">
    <property type="entry name" value="HISTONE ACETYLTRANSFERASE-RELATED"/>
    <property type="match status" value="1"/>
</dbReference>
<dbReference type="PANTHER" id="PTHR11135:SF1">
    <property type="entry name" value="PROTEIN YHCC"/>
    <property type="match status" value="1"/>
</dbReference>
<dbReference type="Pfam" id="PF04055">
    <property type="entry name" value="Radical_SAM"/>
    <property type="match status" value="1"/>
</dbReference>
<dbReference type="Pfam" id="PF16199">
    <property type="entry name" value="Radical_SAM_C"/>
    <property type="match status" value="1"/>
</dbReference>
<dbReference type="SFLD" id="SFLDG01086">
    <property type="entry name" value="elongater_protein-like"/>
    <property type="match status" value="1"/>
</dbReference>
<dbReference type="SFLD" id="SFLDS00029">
    <property type="entry name" value="Radical_SAM"/>
    <property type="match status" value="1"/>
</dbReference>
<dbReference type="SFLD" id="SFLDG01091">
    <property type="entry name" value="uncharacterized_CHP01210-like"/>
    <property type="match status" value="1"/>
</dbReference>
<dbReference type="SMART" id="SM00729">
    <property type="entry name" value="Elp3"/>
    <property type="match status" value="1"/>
</dbReference>
<dbReference type="SUPFAM" id="SSF102114">
    <property type="entry name" value="Radical SAM enzymes"/>
    <property type="match status" value="1"/>
</dbReference>
<dbReference type="PROSITE" id="PS51918">
    <property type="entry name" value="RADICAL_SAM"/>
    <property type="match status" value="1"/>
</dbReference>
<sequence>MQLQKLVNMFGGDLTRRYGQKVHKLTLHGGFSCPNRDGTIGRGGCTFCNVASFADEAQQHRSIAEQLAHQANLVNRAKRYLAYFQAYTSTFAEVQVLRSMYQQAVSQANIVGLCVGTRPDCVPDAVLDLLCEYKDQGYEVWLELGLQTAHDKTLHRINRGHDFACYQRTTQLARQRGLKVCSHLIVGLPGEGQAECLQTLERVVETGVDGIKLHPLHIVKGSIMAKAWEAGRLNGIELEDYTLTAGEMIRHTPPEVIYHRISASARRPTLLAPLWCENRWTGMVELDRYLNEHGVQGSALGRPWLPPTE</sequence>
<feature type="chain" id="PRO_0000169481" description="Protein YhcC">
    <location>
        <begin position="1"/>
        <end position="309"/>
    </location>
</feature>
<feature type="domain" description="Radical SAM core" evidence="2">
    <location>
        <begin position="17"/>
        <end position="254"/>
    </location>
</feature>
<feature type="binding site" evidence="1">
    <location>
        <position position="33"/>
    </location>
    <ligand>
        <name>[4Fe-4S] cluster</name>
        <dbReference type="ChEBI" id="CHEBI:49883"/>
        <note>4Fe-4S-S-AdoMet</note>
    </ligand>
</feature>
<feature type="binding site" evidence="1">
    <location>
        <position position="45"/>
    </location>
    <ligand>
        <name>[4Fe-4S] cluster</name>
        <dbReference type="ChEBI" id="CHEBI:49883"/>
        <note>4Fe-4S-S-AdoMet</note>
    </ligand>
</feature>
<feature type="binding site" evidence="1">
    <location>
        <position position="48"/>
    </location>
    <ligand>
        <name>[4Fe-4S] cluster</name>
        <dbReference type="ChEBI" id="CHEBI:49883"/>
        <note>4Fe-4S-S-AdoMet</note>
    </ligand>
</feature>
<feature type="sequence conflict" description="In Ref. 3; L20253." evidence="4" ref="3">
    <original>KL</original>
    <variation>NV</variation>
    <location>
        <begin position="24"/>
        <end position="25"/>
    </location>
</feature>
<protein>
    <recommendedName>
        <fullName evidence="4">Protein YhcC</fullName>
    </recommendedName>
</protein>
<organism>
    <name type="scientific">Escherichia coli (strain K12)</name>
    <dbReference type="NCBI Taxonomy" id="83333"/>
    <lineage>
        <taxon>Bacteria</taxon>
        <taxon>Pseudomonadati</taxon>
        <taxon>Pseudomonadota</taxon>
        <taxon>Gammaproteobacteria</taxon>
        <taxon>Enterobacterales</taxon>
        <taxon>Enterobacteriaceae</taxon>
        <taxon>Escherichia</taxon>
    </lineage>
</organism>
<gene>
    <name type="primary">yhcC</name>
    <name type="ordered locus">b3211</name>
    <name type="ordered locus">JW3178</name>
</gene>
<reference key="1">
    <citation type="journal article" date="1997" name="Science">
        <title>The complete genome sequence of Escherichia coli K-12.</title>
        <authorList>
            <person name="Blattner F.R."/>
            <person name="Plunkett G. III"/>
            <person name="Bloch C.A."/>
            <person name="Perna N.T."/>
            <person name="Burland V."/>
            <person name="Riley M."/>
            <person name="Collado-Vides J."/>
            <person name="Glasner J.D."/>
            <person name="Rode C.K."/>
            <person name="Mayhew G.F."/>
            <person name="Gregor J."/>
            <person name="Davis N.W."/>
            <person name="Kirkpatrick H.A."/>
            <person name="Goeden M.A."/>
            <person name="Rose D.J."/>
            <person name="Mau B."/>
            <person name="Shao Y."/>
        </authorList>
    </citation>
    <scope>NUCLEOTIDE SEQUENCE [LARGE SCALE GENOMIC DNA]</scope>
    <source>
        <strain>K12 / MG1655 / ATCC 47076</strain>
    </source>
</reference>
<reference key="2">
    <citation type="journal article" date="2006" name="Mol. Syst. Biol.">
        <title>Highly accurate genome sequences of Escherichia coli K-12 strains MG1655 and W3110.</title>
        <authorList>
            <person name="Hayashi K."/>
            <person name="Morooka N."/>
            <person name="Yamamoto Y."/>
            <person name="Fujita K."/>
            <person name="Isono K."/>
            <person name="Choi S."/>
            <person name="Ohtsubo E."/>
            <person name="Baba T."/>
            <person name="Wanner B.L."/>
            <person name="Mori H."/>
            <person name="Horiuchi T."/>
        </authorList>
    </citation>
    <scope>NUCLEOTIDE SEQUENCE [LARGE SCALE GENOMIC DNA]</scope>
    <source>
        <strain>K12 / W3110 / ATCC 27325 / DSM 5911</strain>
    </source>
</reference>
<reference key="3">
    <citation type="journal article" date="1993" name="J. Bacteriol.">
        <title>Regulation of the gltBDF operon of Escherichia coli: how is a leucine-insensitive operon regulated by the leucine-responsive regulatory protein?</title>
        <authorList>
            <person name="Ernsting B.R."/>
            <person name="Denninger J.W."/>
            <person name="Blumenthal R.M."/>
            <person name="Matthews R.G."/>
        </authorList>
    </citation>
    <scope>NUCLEOTIDE SEQUENCE [GENOMIC DNA] OF 1-39</scope>
    <source>
        <strain>K12 / W3110 / ATCC 27325 / DSM 5911</strain>
    </source>
</reference>
<reference key="4">
    <citation type="journal article" date="2014" name="Metallomics">
        <title>An integrative computational model for large-scale identification of metalloproteins in microbial genomes: a focus on iron-sulfur cluster proteins.</title>
        <authorList>
            <person name="Estellon J."/>
            <person name="Ollagnier de Choudens S."/>
            <person name="Smadja M."/>
            <person name="Fontecave M."/>
            <person name="Vandenbrouck Y."/>
        </authorList>
    </citation>
    <scope>FUNCTION</scope>
    <scope>COFACTOR</scope>
</reference>
<name>YHCC_ECOLI</name>